<accession>Q9BG79</accession>
<sequence length="212" mass="23777">MQLSLALCLVCLLVHAAFRVVEGQGWQAFKNDATEIIPELGEYPEPLPELNNKTMNRAENGGRPPHHPFETKDASEYSCRELHFTRYVTDGPCRSAKPVTELVCSGQCGPARLLPNAIGRGKWWRPSGPDFRCIPDRYRAQRVQLLCPGGAAPRARKVRLVASCKCKRLTRFHNQSELKDFGPEAARPQTGRKLRPRARGTKASRAELENAY</sequence>
<dbReference type="EMBL" id="AAFC03014844">
    <property type="status" value="NOT_ANNOTATED_CDS"/>
    <property type="molecule type" value="Genomic_DNA"/>
</dbReference>
<dbReference type="EMBL" id="AF326738">
    <property type="protein sequence ID" value="AAK13453.1"/>
    <property type="molecule type" value="mRNA"/>
</dbReference>
<dbReference type="SMR" id="Q9BG79"/>
<dbReference type="FunCoup" id="Q9BG79">
    <property type="interactions" value="118"/>
</dbReference>
<dbReference type="STRING" id="9913.ENSBTAP00000066333"/>
<dbReference type="GlyCosmos" id="Q9BG79">
    <property type="glycosylation" value="2 sites, No reported glycans"/>
</dbReference>
<dbReference type="GlyGen" id="Q9BG79">
    <property type="glycosylation" value="2 sites"/>
</dbReference>
<dbReference type="PaxDb" id="9913-ENSBTAP00000017458"/>
<dbReference type="eggNOG" id="ENOG502QTBG">
    <property type="taxonomic scope" value="Eukaryota"/>
</dbReference>
<dbReference type="InParanoid" id="Q9BG79"/>
<dbReference type="OrthoDB" id="6624188at2759"/>
<dbReference type="Proteomes" id="UP000009136">
    <property type="component" value="Unplaced"/>
</dbReference>
<dbReference type="GO" id="GO:0005615">
    <property type="term" value="C:extracellular space"/>
    <property type="evidence" value="ECO:0000318"/>
    <property type="project" value="GO_Central"/>
</dbReference>
<dbReference type="GO" id="GO:0036122">
    <property type="term" value="F:BMP binding"/>
    <property type="evidence" value="ECO:0000318"/>
    <property type="project" value="GO_Central"/>
</dbReference>
<dbReference type="GO" id="GO:0008201">
    <property type="term" value="F:heparin binding"/>
    <property type="evidence" value="ECO:0007669"/>
    <property type="project" value="UniProtKB-KW"/>
</dbReference>
<dbReference type="GO" id="GO:0030514">
    <property type="term" value="P:negative regulation of BMP signaling pathway"/>
    <property type="evidence" value="ECO:0000318"/>
    <property type="project" value="GO_Central"/>
</dbReference>
<dbReference type="GO" id="GO:0030178">
    <property type="term" value="P:negative regulation of Wnt signaling pathway"/>
    <property type="evidence" value="ECO:0000318"/>
    <property type="project" value="GO_Central"/>
</dbReference>
<dbReference type="GO" id="GO:0001503">
    <property type="term" value="P:ossification"/>
    <property type="evidence" value="ECO:0000318"/>
    <property type="project" value="GO_Central"/>
</dbReference>
<dbReference type="GO" id="GO:0016055">
    <property type="term" value="P:Wnt signaling pathway"/>
    <property type="evidence" value="ECO:0007669"/>
    <property type="project" value="UniProtKB-KW"/>
</dbReference>
<dbReference type="FunFam" id="2.10.90.10:FF:000036">
    <property type="entry name" value="Sclerostin"/>
    <property type="match status" value="1"/>
</dbReference>
<dbReference type="Gene3D" id="2.10.90.10">
    <property type="entry name" value="Cystine-knot cytokines"/>
    <property type="match status" value="1"/>
</dbReference>
<dbReference type="InterPro" id="IPR006207">
    <property type="entry name" value="Cys_knot_C"/>
</dbReference>
<dbReference type="InterPro" id="IPR029034">
    <property type="entry name" value="Cystine-knot_cytokine"/>
</dbReference>
<dbReference type="InterPro" id="IPR008835">
    <property type="entry name" value="Sclerostin/SOSTDC1"/>
</dbReference>
<dbReference type="PANTHER" id="PTHR14903:SF4">
    <property type="entry name" value="SCLEROSTIN"/>
    <property type="match status" value="1"/>
</dbReference>
<dbReference type="PANTHER" id="PTHR14903">
    <property type="entry name" value="SCLEROSTIN-RELATED"/>
    <property type="match status" value="1"/>
</dbReference>
<dbReference type="Pfam" id="PF05463">
    <property type="entry name" value="Sclerostin"/>
    <property type="match status" value="1"/>
</dbReference>
<dbReference type="SMART" id="SM00041">
    <property type="entry name" value="CT"/>
    <property type="match status" value="1"/>
</dbReference>
<organism>
    <name type="scientific">Bos taurus</name>
    <name type="common">Bovine</name>
    <dbReference type="NCBI Taxonomy" id="9913"/>
    <lineage>
        <taxon>Eukaryota</taxon>
        <taxon>Metazoa</taxon>
        <taxon>Chordata</taxon>
        <taxon>Craniata</taxon>
        <taxon>Vertebrata</taxon>
        <taxon>Euteleostomi</taxon>
        <taxon>Mammalia</taxon>
        <taxon>Eutheria</taxon>
        <taxon>Laurasiatheria</taxon>
        <taxon>Artiodactyla</taxon>
        <taxon>Ruminantia</taxon>
        <taxon>Pecora</taxon>
        <taxon>Bovidae</taxon>
        <taxon>Bovinae</taxon>
        <taxon>Bos</taxon>
    </lineage>
</organism>
<protein>
    <recommendedName>
        <fullName evidence="2">Sclerostin</fullName>
    </recommendedName>
</protein>
<gene>
    <name evidence="3" type="primary">SOST</name>
</gene>
<comment type="function">
    <text evidence="1">Negative regulator of bone growth that acts through inhibition of Wnt signaling and bone formation.</text>
</comment>
<comment type="subunit">
    <text evidence="1">Interacts with LRP4 (via the extracellular domain); the interaction facilitates the inhibition of Wnt signaling. Interacts with LRP5 (via the first two YWTD-EGF repeat domains); the interaction inhibits Wnt-mediated signaling. Interacts with LRP6.</text>
</comment>
<comment type="subcellular location">
    <subcellularLocation>
        <location evidence="1">Secreted</location>
        <location evidence="1">Extracellular space</location>
        <location evidence="1">Extracellular matrix</location>
    </subcellularLocation>
</comment>
<comment type="similarity">
    <text evidence="6">Belongs to the sclerostin family.</text>
</comment>
<proteinExistence type="evidence at transcript level"/>
<name>SOST_BOVIN</name>
<keyword id="KW-1015">Disulfide bond</keyword>
<keyword id="KW-0272">Extracellular matrix</keyword>
<keyword id="KW-0325">Glycoprotein</keyword>
<keyword id="KW-0358">Heparin-binding</keyword>
<keyword id="KW-1185">Reference proteome</keyword>
<keyword id="KW-0964">Secreted</keyword>
<keyword id="KW-0732">Signal</keyword>
<keyword id="KW-0879">Wnt signaling pathway</keyword>
<evidence type="ECO:0000250" key="1"/>
<evidence type="ECO:0000250" key="2">
    <source>
        <dbReference type="UniProtKB" id="Q99P68"/>
    </source>
</evidence>
<evidence type="ECO:0000250" key="3">
    <source>
        <dbReference type="UniProtKB" id="Q9BQB4"/>
    </source>
</evidence>
<evidence type="ECO:0000255" key="4"/>
<evidence type="ECO:0000256" key="5">
    <source>
        <dbReference type="SAM" id="MobiDB-lite"/>
    </source>
</evidence>
<evidence type="ECO:0000305" key="6"/>
<feature type="signal peptide" evidence="4">
    <location>
        <begin position="1"/>
        <end position="23"/>
    </location>
</feature>
<feature type="chain" id="PRO_0000181339" description="Sclerostin">
    <location>
        <begin position="24"/>
        <end position="212"/>
    </location>
</feature>
<feature type="domain" description="CTCK">
    <location>
        <begin position="81"/>
        <end position="171"/>
    </location>
</feature>
<feature type="region of interest" description="Disordered" evidence="5">
    <location>
        <begin position="179"/>
        <end position="212"/>
    </location>
</feature>
<feature type="compositionally biased region" description="Basic residues" evidence="5">
    <location>
        <begin position="190"/>
        <end position="202"/>
    </location>
</feature>
<feature type="glycosylation site" description="N-linked (GlcNAc...) asparagine" evidence="4">
    <location>
        <position position="52"/>
    </location>
</feature>
<feature type="glycosylation site" description="N-linked (GlcNAc...) asparagine" evidence="4">
    <location>
        <position position="174"/>
    </location>
</feature>
<feature type="disulfide bond" evidence="1">
    <location>
        <begin position="79"/>
        <end position="133"/>
    </location>
</feature>
<feature type="disulfide bond" evidence="1">
    <location>
        <begin position="93"/>
        <end position="147"/>
    </location>
</feature>
<feature type="disulfide bond" evidence="1">
    <location>
        <begin position="104"/>
        <end position="164"/>
    </location>
</feature>
<feature type="disulfide bond" evidence="1">
    <location>
        <begin position="108"/>
        <end position="166"/>
    </location>
</feature>
<reference key="1">
    <citation type="journal article" date="2009" name="Science">
        <title>The genome sequence of taurine cattle: a window to ruminant biology and evolution.</title>
        <authorList>
            <consortium name="The bovine genome sequencing and analysis consortium"/>
        </authorList>
    </citation>
    <scope>NUCLEOTIDE SEQUENCE [LARGE SCALE GENOMIC DNA]</scope>
    <source>
        <strain>Hereford</strain>
    </source>
</reference>
<reference key="2">
    <citation type="journal article" date="2001" name="Am. J. Hum. Genet.">
        <title>Bone dysplasia sclerosteosis results from loss of the SOST gene product, a novel cystine knot-containing protein.</title>
        <authorList>
            <person name="Brunkow M.E."/>
            <person name="Gardner J.C."/>
            <person name="Van Ness J."/>
            <person name="Paeper B.W."/>
            <person name="Kovacevich B.R."/>
            <person name="Proll S."/>
            <person name="Skonier J.E."/>
            <person name="Zhao L."/>
            <person name="Sabo P.J."/>
            <person name="Fu Y.H."/>
            <person name="Alisch R.S."/>
            <person name="Gillett L."/>
            <person name="Colbert T."/>
            <person name="Tacconi P."/>
            <person name="Galas D."/>
            <person name="Hamersma H."/>
            <person name="Beighton P."/>
            <person name="Mulligan J.T."/>
        </authorList>
    </citation>
    <scope>NUCLEOTIDE SEQUENCE [MRNA] OF 31-206</scope>
</reference>